<keyword id="KW-0002">3D-structure</keyword>
<keyword id="KW-0903">Direct protein sequencing</keyword>
<keyword id="KW-1015">Disulfide bond</keyword>
<keyword id="KW-0646">Protease inhibitor</keyword>
<keyword id="KW-0722">Serine protease inhibitor</keyword>
<protein>
    <recommendedName>
        <fullName>Bowman-Birk type proteinase inhibitor</fullName>
    </recommendedName>
</protein>
<sequence length="82" mass="9130">SGHHDETTDEPSESSKPCCDQCSCTKSMPPKCRCSDIRLNSCHSACKSCACTYSIPAKCFCTDINDFCYEPCKSSRDDDWDN</sequence>
<reference key="1">
    <citation type="journal article" date="1979" name="FEBS Lett.">
        <title>The amino acid sequence of adzuki bean proteinase inhibitor I.</title>
        <authorList>
            <person name="Ishikawa C."/>
            <person name="Nakamura S."/>
            <person name="Watanabe K."/>
            <person name="Takahashi K."/>
        </authorList>
    </citation>
    <scope>PROTEIN SEQUENCE</scope>
</reference>
<reference key="2">
    <citation type="journal article" date="1979" name="Agric. Biol. Chem.">
        <title>Amino acid sequences of proteinase inhibitors II and II' from adzuki beans.</title>
        <authorList>
            <person name="Yoshikawa M."/>
            <person name="Kiyohara T."/>
            <person name="Iwasaki T."/>
            <person name="Ishii Y."/>
            <person name="Kimura N."/>
        </authorList>
        <dbReference type="AGRICOLA" id="IND79038424"/>
    </citation>
    <scope>PROTEIN SEQUENCE</scope>
</reference>
<reference key="3">
    <citation type="journal article" date="1986" name="J. Biochem.">
        <title>Structure of the trypsin-binding domain of Bowman-Birk type protease inhibitor and its interaction with trypsin.</title>
        <authorList>
            <person name="Tsunogae Y."/>
            <person name="Tanaka I."/>
            <person name="Yamane T."/>
            <person name="Kikkawa J."/>
            <person name="Ashida T."/>
            <person name="Ishikawa C."/>
            <person name="Watanabe K."/>
            <person name="Nakamura S."/>
            <person name="Takahashi K."/>
        </authorList>
    </citation>
    <scope>X-RAY CRYSTALLOGRAPHY (2.30 ANGSTROMS)</scope>
    <scope>DISULFIDE BONDS</scope>
</reference>
<organism>
    <name type="scientific">Phaseolus angularis</name>
    <name type="common">Azuki bean</name>
    <name type="synonym">Vigna angularis</name>
    <dbReference type="NCBI Taxonomy" id="3914"/>
    <lineage>
        <taxon>Eukaryota</taxon>
        <taxon>Viridiplantae</taxon>
        <taxon>Streptophyta</taxon>
        <taxon>Embryophyta</taxon>
        <taxon>Tracheophyta</taxon>
        <taxon>Spermatophyta</taxon>
        <taxon>Magnoliopsida</taxon>
        <taxon>eudicotyledons</taxon>
        <taxon>Gunneridae</taxon>
        <taxon>Pentapetalae</taxon>
        <taxon>rosids</taxon>
        <taxon>fabids</taxon>
        <taxon>Fabales</taxon>
        <taxon>Fabaceae</taxon>
        <taxon>Papilionoideae</taxon>
        <taxon>50 kb inversion clade</taxon>
        <taxon>NPAAA clade</taxon>
        <taxon>indigoferoid/millettioid clade</taxon>
        <taxon>Phaseoleae</taxon>
        <taxon>Vigna</taxon>
    </lineage>
</organism>
<accession>P01058</accession>
<dbReference type="PIR" id="A90019">
    <property type="entry name" value="TIZB2"/>
</dbReference>
<dbReference type="PIR" id="A91453">
    <property type="entry name" value="TIZB1"/>
</dbReference>
<dbReference type="PDB" id="1TAB">
    <property type="method" value="X-ray"/>
    <property type="resolution" value="2.30 A"/>
    <property type="chains" value="I=1-82"/>
</dbReference>
<dbReference type="PDBsum" id="1TAB"/>
<dbReference type="SMR" id="P01058"/>
<dbReference type="MEROPS" id="I12.001"/>
<dbReference type="EvolutionaryTrace" id="P01058"/>
<dbReference type="GO" id="GO:0005576">
    <property type="term" value="C:extracellular region"/>
    <property type="evidence" value="ECO:0007669"/>
    <property type="project" value="InterPro"/>
</dbReference>
<dbReference type="GO" id="GO:0004867">
    <property type="term" value="F:serine-type endopeptidase inhibitor activity"/>
    <property type="evidence" value="ECO:0007669"/>
    <property type="project" value="UniProtKB-KW"/>
</dbReference>
<dbReference type="CDD" id="cd00023">
    <property type="entry name" value="BBI"/>
    <property type="match status" value="1"/>
</dbReference>
<dbReference type="FunFam" id="2.10.69.10:FF:000001">
    <property type="entry name" value="Bowman-Birk type proteinase inhibitor"/>
    <property type="match status" value="1"/>
</dbReference>
<dbReference type="Gene3D" id="2.10.69.10">
    <property type="entry name" value="Cysteine Protease (Bromelain) Inhibitor, subunit H"/>
    <property type="match status" value="1"/>
</dbReference>
<dbReference type="InterPro" id="IPR035995">
    <property type="entry name" value="Bowman-Birk_prot_inh"/>
</dbReference>
<dbReference type="InterPro" id="IPR000877">
    <property type="entry name" value="Prot_inh_BBI"/>
</dbReference>
<dbReference type="Pfam" id="PF00228">
    <property type="entry name" value="Bowman-Birk_leg"/>
    <property type="match status" value="2"/>
</dbReference>
<dbReference type="SMART" id="SM00269">
    <property type="entry name" value="BowB"/>
    <property type="match status" value="1"/>
</dbReference>
<dbReference type="SUPFAM" id="SSF57247">
    <property type="entry name" value="Bowman-Birk inhibitor, BBI"/>
    <property type="match status" value="1"/>
</dbReference>
<dbReference type="PROSITE" id="PS00281">
    <property type="entry name" value="BOWMAN_BIRK"/>
    <property type="match status" value="1"/>
</dbReference>
<feature type="chain" id="PRO_0000105846" description="Bowman-Birk type proteinase inhibitor">
    <location>
        <begin position="1"/>
        <end position="82"/>
    </location>
</feature>
<feature type="region of interest" description="Disordered" evidence="3">
    <location>
        <begin position="1"/>
        <end position="24"/>
    </location>
</feature>
<feature type="site" description="Reactive bond for trypsin" evidence="1">
    <location>
        <begin position="26"/>
        <end position="27"/>
    </location>
</feature>
<feature type="site" description="Reactive bond for chymotrypsin" evidence="1">
    <location>
        <begin position="53"/>
        <end position="54"/>
    </location>
</feature>
<feature type="disulfide bond" evidence="4">
    <location>
        <begin position="18"/>
        <end position="72"/>
    </location>
</feature>
<feature type="disulfide bond" evidence="4">
    <location>
        <begin position="19"/>
        <end position="34"/>
    </location>
</feature>
<feature type="disulfide bond" evidence="4">
    <location>
        <begin position="22"/>
        <end position="68"/>
    </location>
</feature>
<feature type="disulfide bond" evidence="4">
    <location>
        <begin position="24"/>
        <end position="32"/>
    </location>
</feature>
<feature type="disulfide bond" evidence="2">
    <location>
        <begin position="42"/>
        <end position="49"/>
    </location>
</feature>
<feature type="disulfide bond" evidence="2">
    <location>
        <begin position="46"/>
        <end position="61"/>
    </location>
</feature>
<feature type="disulfide bond" evidence="2">
    <location>
        <begin position="51"/>
        <end position="59"/>
    </location>
</feature>
<feature type="sequence variant" description="In a shorter form.">
    <location>
        <begin position="1"/>
        <end position="9"/>
    </location>
</feature>
<feature type="sequence conflict" description="In Ref. 2; AA sequence." evidence="5" ref="2">
    <original>DE</original>
    <variation>ED</variation>
    <location>
        <begin position="5"/>
        <end position="6"/>
    </location>
</feature>
<feature type="sequence conflict" description="In Ref. 2; AA sequence." evidence="5" ref="2">
    <location>
        <position position="23"/>
    </location>
</feature>
<feature type="sequence conflict" description="In Ref. 2; AA sequence." evidence="5" ref="2">
    <original>N</original>
    <variation>D</variation>
    <location>
        <position position="40"/>
    </location>
</feature>
<feature type="strand" evidence="6">
    <location>
        <begin position="17"/>
        <end position="19"/>
    </location>
</feature>
<feature type="strand" evidence="6">
    <location>
        <begin position="22"/>
        <end position="29"/>
    </location>
</feature>
<feature type="strand" evidence="6">
    <location>
        <begin position="32"/>
        <end position="34"/>
    </location>
</feature>
<proteinExistence type="evidence at protein level"/>
<comment type="function">
    <text>Trypsin and chymotrypsin are inhibited simultaneously. There are two separate reactive sites for trypsin and chymotrypsin but they do not inhibit simultaneously.</text>
</comment>
<comment type="similarity">
    <text evidence="5">Belongs to the Bowman-Birk serine protease inhibitor family.</text>
</comment>
<name>IBB1_PHAAN</name>
<evidence type="ECO:0000250" key="1"/>
<evidence type="ECO:0000250" key="2">
    <source>
        <dbReference type="UniProtKB" id="P80321"/>
    </source>
</evidence>
<evidence type="ECO:0000256" key="3">
    <source>
        <dbReference type="SAM" id="MobiDB-lite"/>
    </source>
</evidence>
<evidence type="ECO:0000269" key="4">
    <source>
    </source>
</evidence>
<evidence type="ECO:0000305" key="5"/>
<evidence type="ECO:0007829" key="6">
    <source>
        <dbReference type="PDB" id="1TAB"/>
    </source>
</evidence>